<organism>
    <name type="scientific">Streptococcus pyogenes serotype M6 (strain ATCC BAA-946 / MGAS10394)</name>
    <dbReference type="NCBI Taxonomy" id="286636"/>
    <lineage>
        <taxon>Bacteria</taxon>
        <taxon>Bacillati</taxon>
        <taxon>Bacillota</taxon>
        <taxon>Bacilli</taxon>
        <taxon>Lactobacillales</taxon>
        <taxon>Streptococcaceae</taxon>
        <taxon>Streptococcus</taxon>
    </lineage>
</organism>
<gene>
    <name evidence="2" type="primary">rpmA</name>
    <name type="ordered locus">M6_Spy0653</name>
</gene>
<dbReference type="EMBL" id="CP000003">
    <property type="protein sequence ID" value="AAT86788.1"/>
    <property type="status" value="ALT_INIT"/>
    <property type="molecule type" value="Genomic_DNA"/>
</dbReference>
<dbReference type="SMR" id="Q5XCS5"/>
<dbReference type="KEGG" id="spa:M6_Spy0653"/>
<dbReference type="HOGENOM" id="CLU_095424_4_0_9"/>
<dbReference type="Proteomes" id="UP000001167">
    <property type="component" value="Chromosome"/>
</dbReference>
<dbReference type="GO" id="GO:0022625">
    <property type="term" value="C:cytosolic large ribosomal subunit"/>
    <property type="evidence" value="ECO:0007669"/>
    <property type="project" value="TreeGrafter"/>
</dbReference>
<dbReference type="GO" id="GO:0003735">
    <property type="term" value="F:structural constituent of ribosome"/>
    <property type="evidence" value="ECO:0007669"/>
    <property type="project" value="InterPro"/>
</dbReference>
<dbReference type="GO" id="GO:0006412">
    <property type="term" value="P:translation"/>
    <property type="evidence" value="ECO:0007669"/>
    <property type="project" value="UniProtKB-UniRule"/>
</dbReference>
<dbReference type="FunFam" id="2.40.50.100:FF:000004">
    <property type="entry name" value="50S ribosomal protein L27"/>
    <property type="match status" value="1"/>
</dbReference>
<dbReference type="Gene3D" id="2.40.50.100">
    <property type="match status" value="1"/>
</dbReference>
<dbReference type="HAMAP" id="MF_00539">
    <property type="entry name" value="Ribosomal_bL27"/>
    <property type="match status" value="1"/>
</dbReference>
<dbReference type="InterPro" id="IPR001684">
    <property type="entry name" value="Ribosomal_bL27"/>
</dbReference>
<dbReference type="InterPro" id="IPR018261">
    <property type="entry name" value="Ribosomal_bL27_CS"/>
</dbReference>
<dbReference type="NCBIfam" id="TIGR00062">
    <property type="entry name" value="L27"/>
    <property type="match status" value="1"/>
</dbReference>
<dbReference type="PANTHER" id="PTHR15893:SF0">
    <property type="entry name" value="LARGE RIBOSOMAL SUBUNIT PROTEIN BL27M"/>
    <property type="match status" value="1"/>
</dbReference>
<dbReference type="PANTHER" id="PTHR15893">
    <property type="entry name" value="RIBOSOMAL PROTEIN L27"/>
    <property type="match status" value="1"/>
</dbReference>
<dbReference type="Pfam" id="PF01016">
    <property type="entry name" value="Ribosomal_L27"/>
    <property type="match status" value="1"/>
</dbReference>
<dbReference type="PRINTS" id="PR00063">
    <property type="entry name" value="RIBOSOMALL27"/>
</dbReference>
<dbReference type="SUPFAM" id="SSF110324">
    <property type="entry name" value="Ribosomal L27 protein-like"/>
    <property type="match status" value="1"/>
</dbReference>
<dbReference type="PROSITE" id="PS00831">
    <property type="entry name" value="RIBOSOMAL_L27"/>
    <property type="match status" value="1"/>
</dbReference>
<reference key="1">
    <citation type="journal article" date="2004" name="J. Infect. Dis.">
        <title>Progress toward characterization of the group A Streptococcus metagenome: complete genome sequence of a macrolide-resistant serotype M6 strain.</title>
        <authorList>
            <person name="Banks D.J."/>
            <person name="Porcella S.F."/>
            <person name="Barbian K.D."/>
            <person name="Beres S.B."/>
            <person name="Philips L.E."/>
            <person name="Voyich J.M."/>
            <person name="DeLeo F.R."/>
            <person name="Martin J.M."/>
            <person name="Somerville G.A."/>
            <person name="Musser J.M."/>
        </authorList>
    </citation>
    <scope>NUCLEOTIDE SEQUENCE [LARGE SCALE GENOMIC DNA]</scope>
    <source>
        <strain>ATCC BAA-946 / MGAS10394</strain>
    </source>
</reference>
<name>RL27_STRP6</name>
<feature type="propeptide" id="PRO_0000459966" evidence="1">
    <location>
        <begin position="1"/>
        <end position="9"/>
    </location>
</feature>
<feature type="chain" id="PRO_0000181182" description="Large ribosomal subunit protein bL27">
    <location>
        <begin position="10"/>
        <end position="94"/>
    </location>
</feature>
<feature type="region of interest" description="Disordered" evidence="3">
    <location>
        <begin position="11"/>
        <end position="34"/>
    </location>
</feature>
<proteinExistence type="inferred from homology"/>
<sequence>MNLANLQLFAHKKGGGSTSNGRDSQAKRLGAKAADGQTVSGGSILYRQRGTHIYPGVNVGRGGDDTLFAKVEGVVRFERKGRDKKQVSVYPVAK</sequence>
<accession>Q5XCS5</accession>
<evidence type="ECO:0000250" key="1">
    <source>
        <dbReference type="UniProtKB" id="Q2FXT0"/>
    </source>
</evidence>
<evidence type="ECO:0000255" key="2">
    <source>
        <dbReference type="HAMAP-Rule" id="MF_00539"/>
    </source>
</evidence>
<evidence type="ECO:0000256" key="3">
    <source>
        <dbReference type="SAM" id="MobiDB-lite"/>
    </source>
</evidence>
<evidence type="ECO:0000305" key="4"/>
<protein>
    <recommendedName>
        <fullName evidence="2">Large ribosomal subunit protein bL27</fullName>
    </recommendedName>
    <alternativeName>
        <fullName evidence="4">50S ribosomal protein L27</fullName>
    </alternativeName>
</protein>
<keyword id="KW-0687">Ribonucleoprotein</keyword>
<keyword id="KW-0689">Ribosomal protein</keyword>
<comment type="PTM">
    <text evidence="1">The N-terminus is cleaved by ribosomal processing cysteine protease Prp.</text>
</comment>
<comment type="similarity">
    <text evidence="2">Belongs to the bacterial ribosomal protein bL27 family.</text>
</comment>
<comment type="sequence caution" evidence="4">
    <conflict type="erroneous initiation">
        <sequence resource="EMBL-CDS" id="AAT86788"/>
    </conflict>
    <text>Extended N-terminus.</text>
</comment>